<proteinExistence type="evidence at transcript level"/>
<evidence type="ECO:0000250" key="1"/>
<evidence type="ECO:0000305" key="2"/>
<reference key="1">
    <citation type="journal article" date="1994" name="J. Mol. Biol.">
        <title>Genes encoding actin-related proteins of Drosophila melanogaster.</title>
        <authorList>
            <person name="Fyrberg C."/>
            <person name="Ryan L."/>
            <person name="Kenton M."/>
            <person name="Fyrberg E.A."/>
        </authorList>
    </citation>
    <scope>NUCLEOTIDE SEQUENCE [MRNA]</scope>
    <source>
        <strain>Oregon-R</strain>
    </source>
</reference>
<reference key="2">
    <citation type="journal article" date="2000" name="Science">
        <title>The genome sequence of Drosophila melanogaster.</title>
        <authorList>
            <person name="Adams M.D."/>
            <person name="Celniker S.E."/>
            <person name="Holt R.A."/>
            <person name="Evans C.A."/>
            <person name="Gocayne J.D."/>
            <person name="Amanatides P.G."/>
            <person name="Scherer S.E."/>
            <person name="Li P.W."/>
            <person name="Hoskins R.A."/>
            <person name="Galle R.F."/>
            <person name="George R.A."/>
            <person name="Lewis S.E."/>
            <person name="Richards S."/>
            <person name="Ashburner M."/>
            <person name="Henderson S.N."/>
            <person name="Sutton G.G."/>
            <person name="Wortman J.R."/>
            <person name="Yandell M.D."/>
            <person name="Zhang Q."/>
            <person name="Chen L.X."/>
            <person name="Brandon R.C."/>
            <person name="Rogers Y.-H.C."/>
            <person name="Blazej R.G."/>
            <person name="Champe M."/>
            <person name="Pfeiffer B.D."/>
            <person name="Wan K.H."/>
            <person name="Doyle C."/>
            <person name="Baxter E.G."/>
            <person name="Helt G."/>
            <person name="Nelson C.R."/>
            <person name="Miklos G.L.G."/>
            <person name="Abril J.F."/>
            <person name="Agbayani A."/>
            <person name="An H.-J."/>
            <person name="Andrews-Pfannkoch C."/>
            <person name="Baldwin D."/>
            <person name="Ballew R.M."/>
            <person name="Basu A."/>
            <person name="Baxendale J."/>
            <person name="Bayraktaroglu L."/>
            <person name="Beasley E.M."/>
            <person name="Beeson K.Y."/>
            <person name="Benos P.V."/>
            <person name="Berman B.P."/>
            <person name="Bhandari D."/>
            <person name="Bolshakov S."/>
            <person name="Borkova D."/>
            <person name="Botchan M.R."/>
            <person name="Bouck J."/>
            <person name="Brokstein P."/>
            <person name="Brottier P."/>
            <person name="Burtis K.C."/>
            <person name="Busam D.A."/>
            <person name="Butler H."/>
            <person name="Cadieu E."/>
            <person name="Center A."/>
            <person name="Chandra I."/>
            <person name="Cherry J.M."/>
            <person name="Cawley S."/>
            <person name="Dahlke C."/>
            <person name="Davenport L.B."/>
            <person name="Davies P."/>
            <person name="de Pablos B."/>
            <person name="Delcher A."/>
            <person name="Deng Z."/>
            <person name="Mays A.D."/>
            <person name="Dew I."/>
            <person name="Dietz S.M."/>
            <person name="Dodson K."/>
            <person name="Doup L.E."/>
            <person name="Downes M."/>
            <person name="Dugan-Rocha S."/>
            <person name="Dunkov B.C."/>
            <person name="Dunn P."/>
            <person name="Durbin K.J."/>
            <person name="Evangelista C.C."/>
            <person name="Ferraz C."/>
            <person name="Ferriera S."/>
            <person name="Fleischmann W."/>
            <person name="Fosler C."/>
            <person name="Gabrielian A.E."/>
            <person name="Garg N.S."/>
            <person name="Gelbart W.M."/>
            <person name="Glasser K."/>
            <person name="Glodek A."/>
            <person name="Gong F."/>
            <person name="Gorrell J.H."/>
            <person name="Gu Z."/>
            <person name="Guan P."/>
            <person name="Harris M."/>
            <person name="Harris N.L."/>
            <person name="Harvey D.A."/>
            <person name="Heiman T.J."/>
            <person name="Hernandez J.R."/>
            <person name="Houck J."/>
            <person name="Hostin D."/>
            <person name="Houston K.A."/>
            <person name="Howland T.J."/>
            <person name="Wei M.-H."/>
            <person name="Ibegwam C."/>
            <person name="Jalali M."/>
            <person name="Kalush F."/>
            <person name="Karpen G.H."/>
            <person name="Ke Z."/>
            <person name="Kennison J.A."/>
            <person name="Ketchum K.A."/>
            <person name="Kimmel B.E."/>
            <person name="Kodira C.D."/>
            <person name="Kraft C.L."/>
            <person name="Kravitz S."/>
            <person name="Kulp D."/>
            <person name="Lai Z."/>
            <person name="Lasko P."/>
            <person name="Lei Y."/>
            <person name="Levitsky A.A."/>
            <person name="Li J.H."/>
            <person name="Li Z."/>
            <person name="Liang Y."/>
            <person name="Lin X."/>
            <person name="Liu X."/>
            <person name="Mattei B."/>
            <person name="McIntosh T.C."/>
            <person name="McLeod M.P."/>
            <person name="McPherson D."/>
            <person name="Merkulov G."/>
            <person name="Milshina N.V."/>
            <person name="Mobarry C."/>
            <person name="Morris J."/>
            <person name="Moshrefi A."/>
            <person name="Mount S.M."/>
            <person name="Moy M."/>
            <person name="Murphy B."/>
            <person name="Murphy L."/>
            <person name="Muzny D.M."/>
            <person name="Nelson D.L."/>
            <person name="Nelson D.R."/>
            <person name="Nelson K.A."/>
            <person name="Nixon K."/>
            <person name="Nusskern D.R."/>
            <person name="Pacleb J.M."/>
            <person name="Palazzolo M."/>
            <person name="Pittman G.S."/>
            <person name="Pan S."/>
            <person name="Pollard J."/>
            <person name="Puri V."/>
            <person name="Reese M.G."/>
            <person name="Reinert K."/>
            <person name="Remington K."/>
            <person name="Saunders R.D.C."/>
            <person name="Scheeler F."/>
            <person name="Shen H."/>
            <person name="Shue B.C."/>
            <person name="Siden-Kiamos I."/>
            <person name="Simpson M."/>
            <person name="Skupski M.P."/>
            <person name="Smith T.J."/>
            <person name="Spier E."/>
            <person name="Spradling A.C."/>
            <person name="Stapleton M."/>
            <person name="Strong R."/>
            <person name="Sun E."/>
            <person name="Svirskas R."/>
            <person name="Tector C."/>
            <person name="Turner R."/>
            <person name="Venter E."/>
            <person name="Wang A.H."/>
            <person name="Wang X."/>
            <person name="Wang Z.-Y."/>
            <person name="Wassarman D.A."/>
            <person name="Weinstock G.M."/>
            <person name="Weissenbach J."/>
            <person name="Williams S.M."/>
            <person name="Woodage T."/>
            <person name="Worley K.C."/>
            <person name="Wu D."/>
            <person name="Yang S."/>
            <person name="Yao Q.A."/>
            <person name="Ye J."/>
            <person name="Yeh R.-F."/>
            <person name="Zaveri J.S."/>
            <person name="Zhan M."/>
            <person name="Zhang G."/>
            <person name="Zhao Q."/>
            <person name="Zheng L."/>
            <person name="Zheng X.H."/>
            <person name="Zhong F.N."/>
            <person name="Zhong W."/>
            <person name="Zhou X."/>
            <person name="Zhu S.C."/>
            <person name="Zhu X."/>
            <person name="Smith H.O."/>
            <person name="Gibbs R.A."/>
            <person name="Myers E.W."/>
            <person name="Rubin G.M."/>
            <person name="Venter J.C."/>
        </authorList>
    </citation>
    <scope>NUCLEOTIDE SEQUENCE [LARGE SCALE GENOMIC DNA]</scope>
    <source>
        <strain>Berkeley</strain>
    </source>
</reference>
<reference key="3">
    <citation type="journal article" date="2002" name="Genome Biol.">
        <title>Annotation of the Drosophila melanogaster euchromatic genome: a systematic review.</title>
        <authorList>
            <person name="Misra S."/>
            <person name="Crosby M.A."/>
            <person name="Mungall C.J."/>
            <person name="Matthews B.B."/>
            <person name="Campbell K.S."/>
            <person name="Hradecky P."/>
            <person name="Huang Y."/>
            <person name="Kaminker J.S."/>
            <person name="Millburn G.H."/>
            <person name="Prochnik S.E."/>
            <person name="Smith C.D."/>
            <person name="Tupy J.L."/>
            <person name="Whitfield E.J."/>
            <person name="Bayraktaroglu L."/>
            <person name="Berman B.P."/>
            <person name="Bettencourt B.R."/>
            <person name="Celniker S.E."/>
            <person name="de Grey A.D.N.J."/>
            <person name="Drysdale R.A."/>
            <person name="Harris N.L."/>
            <person name="Richter J."/>
            <person name="Russo S."/>
            <person name="Schroeder A.J."/>
            <person name="Shu S.Q."/>
            <person name="Stapleton M."/>
            <person name="Yamada C."/>
            <person name="Ashburner M."/>
            <person name="Gelbart W.M."/>
            <person name="Rubin G.M."/>
            <person name="Lewis S.E."/>
        </authorList>
    </citation>
    <scope>GENOME REANNOTATION</scope>
    <source>
        <strain>Berkeley</strain>
    </source>
</reference>
<reference key="4">
    <citation type="journal article" date="2002" name="Genome Biol.">
        <title>A Drosophila full-length cDNA resource.</title>
        <authorList>
            <person name="Stapleton M."/>
            <person name="Carlson J.W."/>
            <person name="Brokstein P."/>
            <person name="Yu C."/>
            <person name="Champe M."/>
            <person name="George R.A."/>
            <person name="Guarin H."/>
            <person name="Kronmiller B."/>
            <person name="Pacleb J.M."/>
            <person name="Park S."/>
            <person name="Wan K.H."/>
            <person name="Rubin G.M."/>
            <person name="Celniker S.E."/>
        </authorList>
    </citation>
    <scope>NUCLEOTIDE SEQUENCE [LARGE SCALE MRNA]</scope>
    <source>
        <strain>Berkeley</strain>
        <tissue>Head</tissue>
    </source>
</reference>
<comment type="subcellular location">
    <subcellularLocation>
        <location evidence="1">Cytoplasm</location>
        <location evidence="1">Cytoskeleton</location>
    </subcellularLocation>
</comment>
<comment type="similarity">
    <text evidence="2">Belongs to the actin family. ARP1 subfamily.</text>
</comment>
<accession>P45889</accession>
<accession>Q9VG37</accession>
<feature type="chain" id="PRO_0000089063" description="Actin-related protein 1">
    <location>
        <begin position="1"/>
        <end position="376"/>
    </location>
</feature>
<feature type="sequence conflict" description="In Ref. 1; CAA55240." evidence="2" ref="1">
    <original>VL</original>
    <variation>AV</variation>
    <location>
        <begin position="261"/>
        <end position="262"/>
    </location>
</feature>
<keyword id="KW-0067">ATP-binding</keyword>
<keyword id="KW-0963">Cytoplasm</keyword>
<keyword id="KW-0206">Cytoskeleton</keyword>
<keyword id="KW-0547">Nucleotide-binding</keyword>
<keyword id="KW-1185">Reference proteome</keyword>
<organism>
    <name type="scientific">Drosophila melanogaster</name>
    <name type="common">Fruit fly</name>
    <dbReference type="NCBI Taxonomy" id="7227"/>
    <lineage>
        <taxon>Eukaryota</taxon>
        <taxon>Metazoa</taxon>
        <taxon>Ecdysozoa</taxon>
        <taxon>Arthropoda</taxon>
        <taxon>Hexapoda</taxon>
        <taxon>Insecta</taxon>
        <taxon>Pterygota</taxon>
        <taxon>Neoptera</taxon>
        <taxon>Endopterygota</taxon>
        <taxon>Diptera</taxon>
        <taxon>Brachycera</taxon>
        <taxon>Muscomorpha</taxon>
        <taxon>Ephydroidea</taxon>
        <taxon>Drosophilidae</taxon>
        <taxon>Drosophila</taxon>
        <taxon>Sophophora</taxon>
    </lineage>
</organism>
<dbReference type="EMBL" id="X78488">
    <property type="protein sequence ID" value="CAA55240.1"/>
    <property type="molecule type" value="mRNA"/>
</dbReference>
<dbReference type="EMBL" id="AE014297">
    <property type="protein sequence ID" value="AAF54853.1"/>
    <property type="molecule type" value="Genomic_DNA"/>
</dbReference>
<dbReference type="EMBL" id="AY070666">
    <property type="protein sequence ID" value="AAL48137.1"/>
    <property type="molecule type" value="mRNA"/>
</dbReference>
<dbReference type="PIR" id="S47988">
    <property type="entry name" value="S47988"/>
</dbReference>
<dbReference type="RefSeq" id="NP_524331.2">
    <property type="nucleotide sequence ID" value="NM_079607.3"/>
</dbReference>
<dbReference type="SMR" id="P45889"/>
<dbReference type="BioGRID" id="66659">
    <property type="interactions" value="21"/>
</dbReference>
<dbReference type="ComplexPortal" id="CPX-2434">
    <property type="entry name" value="Dynactin complex"/>
</dbReference>
<dbReference type="DIP" id="DIP-18643N"/>
<dbReference type="FunCoup" id="P45889">
    <property type="interactions" value="1509"/>
</dbReference>
<dbReference type="IntAct" id="P45889">
    <property type="interactions" value="62"/>
</dbReference>
<dbReference type="STRING" id="7227.FBpp0082121"/>
<dbReference type="PaxDb" id="7227-FBpp0082121"/>
<dbReference type="DNASU" id="41566"/>
<dbReference type="EnsemblMetazoa" id="FBtr0082652">
    <property type="protein sequence ID" value="FBpp0082121"/>
    <property type="gene ID" value="FBgn0011745"/>
</dbReference>
<dbReference type="GeneID" id="41566"/>
<dbReference type="KEGG" id="dme:Dmel_CG6174"/>
<dbReference type="AGR" id="FB:FBgn0011745"/>
<dbReference type="CTD" id="41566"/>
<dbReference type="FlyBase" id="FBgn0011745">
    <property type="gene designation" value="Arp1"/>
</dbReference>
<dbReference type="VEuPathDB" id="VectorBase:FBgn0011745"/>
<dbReference type="eggNOG" id="KOG0676">
    <property type="taxonomic scope" value="Eukaryota"/>
</dbReference>
<dbReference type="GeneTree" id="ENSGT00940000155782"/>
<dbReference type="HOGENOM" id="CLU_027965_0_1_1"/>
<dbReference type="InParanoid" id="P45889"/>
<dbReference type="OMA" id="YTTWTGG"/>
<dbReference type="OrthoDB" id="5132116at2759"/>
<dbReference type="PhylomeDB" id="P45889"/>
<dbReference type="Reactome" id="R-DME-3371497">
    <property type="pathway name" value="HSP90 chaperone cycle for steroid hormone receptors (SHR) in the presence of ligand"/>
</dbReference>
<dbReference type="Reactome" id="R-DME-6798695">
    <property type="pathway name" value="Neutrophil degranulation"/>
</dbReference>
<dbReference type="Reactome" id="R-DME-6807878">
    <property type="pathway name" value="COPI-mediated anterograde transport"/>
</dbReference>
<dbReference type="Reactome" id="R-DME-6811436">
    <property type="pathway name" value="COPI-independent Golgi-to-ER retrograde traffic"/>
</dbReference>
<dbReference type="SignaLink" id="P45889"/>
<dbReference type="BioGRID-ORCS" id="41566">
    <property type="hits" value="0 hits in 3 CRISPR screens"/>
</dbReference>
<dbReference type="ChiTaRS" id="Arp1">
    <property type="organism name" value="fly"/>
</dbReference>
<dbReference type="GenomeRNAi" id="41566"/>
<dbReference type="PRO" id="PR:P45889"/>
<dbReference type="Proteomes" id="UP000000803">
    <property type="component" value="Chromosome 3R"/>
</dbReference>
<dbReference type="Bgee" id="FBgn0011745">
    <property type="expression patterns" value="Expressed in eye disc (Drosophila) and 206 other cell types or tissues"/>
</dbReference>
<dbReference type="GO" id="GO:1904115">
    <property type="term" value="C:axon cytoplasm"/>
    <property type="evidence" value="ECO:0007669"/>
    <property type="project" value="GOC"/>
</dbReference>
<dbReference type="GO" id="GO:0005869">
    <property type="term" value="C:dynactin complex"/>
    <property type="evidence" value="ECO:0000318"/>
    <property type="project" value="GO_Central"/>
</dbReference>
<dbReference type="GO" id="GO:0005524">
    <property type="term" value="F:ATP binding"/>
    <property type="evidence" value="ECO:0007669"/>
    <property type="project" value="UniProtKB-KW"/>
</dbReference>
<dbReference type="GO" id="GO:0008089">
    <property type="term" value="P:anterograde axonal transport"/>
    <property type="evidence" value="ECO:0000315"/>
    <property type="project" value="FlyBase"/>
</dbReference>
<dbReference type="GO" id="GO:0019896">
    <property type="term" value="P:axonal transport of mitochondrion"/>
    <property type="evidence" value="ECO:0000315"/>
    <property type="project" value="FlyBase"/>
</dbReference>
<dbReference type="GO" id="GO:0007018">
    <property type="term" value="P:microtubule-based movement"/>
    <property type="evidence" value="ECO:0000314"/>
    <property type="project" value="FlyBase"/>
</dbReference>
<dbReference type="GO" id="GO:0000278">
    <property type="term" value="P:mitotic cell cycle"/>
    <property type="evidence" value="ECO:0007001"/>
    <property type="project" value="FlyBase"/>
</dbReference>
<dbReference type="GO" id="GO:0008090">
    <property type="term" value="P:retrograde axonal transport"/>
    <property type="evidence" value="ECO:0000315"/>
    <property type="project" value="FlyBase"/>
</dbReference>
<dbReference type="CDD" id="cd10216">
    <property type="entry name" value="ASKHA_NBD_Arp1"/>
    <property type="match status" value="1"/>
</dbReference>
<dbReference type="FunFam" id="3.30.420.40:FF:000188">
    <property type="entry name" value="Actin like 6B"/>
    <property type="match status" value="2"/>
</dbReference>
<dbReference type="FunFam" id="3.90.640.10:FF:000008">
    <property type="entry name" value="alpha-centractin isoform X1"/>
    <property type="match status" value="1"/>
</dbReference>
<dbReference type="Gene3D" id="3.30.420.40">
    <property type="match status" value="2"/>
</dbReference>
<dbReference type="Gene3D" id="3.90.640.10">
    <property type="entry name" value="Actin, Chain A, domain 4"/>
    <property type="match status" value="1"/>
</dbReference>
<dbReference type="InterPro" id="IPR004000">
    <property type="entry name" value="Actin"/>
</dbReference>
<dbReference type="InterPro" id="IPR020902">
    <property type="entry name" value="Actin/actin-like_CS"/>
</dbReference>
<dbReference type="InterPro" id="IPR004001">
    <property type="entry name" value="Actin_CS"/>
</dbReference>
<dbReference type="InterPro" id="IPR043129">
    <property type="entry name" value="ATPase_NBD"/>
</dbReference>
<dbReference type="PANTHER" id="PTHR11937">
    <property type="entry name" value="ACTIN"/>
    <property type="match status" value="1"/>
</dbReference>
<dbReference type="Pfam" id="PF00022">
    <property type="entry name" value="Actin"/>
    <property type="match status" value="1"/>
</dbReference>
<dbReference type="PRINTS" id="PR00190">
    <property type="entry name" value="ACTIN"/>
</dbReference>
<dbReference type="SMART" id="SM00268">
    <property type="entry name" value="ACTIN"/>
    <property type="match status" value="1"/>
</dbReference>
<dbReference type="SUPFAM" id="SSF53067">
    <property type="entry name" value="Actin-like ATPase domain"/>
    <property type="match status" value="2"/>
</dbReference>
<dbReference type="PROSITE" id="PS00432">
    <property type="entry name" value="ACTINS_2"/>
    <property type="match status" value="1"/>
</dbReference>
<dbReference type="PROSITE" id="PS01132">
    <property type="entry name" value="ACTINS_ACT_LIKE"/>
    <property type="match status" value="1"/>
</dbReference>
<protein>
    <recommendedName>
        <fullName>Actin-related protein 1</fullName>
    </recommendedName>
    <alternativeName>
        <fullName>Actin-like protein 1</fullName>
    </alternativeName>
    <alternativeName>
        <fullName>Actin-like protein 87C</fullName>
    </alternativeName>
</protein>
<gene>
    <name type="primary">Arp1</name>
    <name type="synonym">Actr87C</name>
    <name type="synonym">Arp87C</name>
    <name type="ORF">CG6174</name>
</gene>
<name>ACTZ_DROME</name>
<sequence>MEPYDVVVNQPVVIDNGSGVIKAGFAGEHIPKCRFPNYIGRPKHVRVMAGALEGDIFVGPKAEEHRGLLSIRYPMEHGIVTDWNDMERIWSYIYSKEQLATFTEDHPVLLTEAPLNPRRNREKAAEFFFEGINAPALFVSMQAVLSLYATGRVTGVVLDSGDGVTHAVPIYEGFAMPHSIMRVDIAGRDVTRYLKTLIRREGFNFRSTAEFEIVRSIKEKVCYLATNPQKEETVETEKFAYKLPDGKIFEIGPARFRAPEVLFRPDLLGEECEGIHDVLMYSIEKSDMDLRKMLYQNIVLSGGSTLFKGFGDRLLSELKKHSAKDLKIRIAAPQERLYSTWMGGSILASLDTFKKMWISKREYEEEGQKAVHRKTF</sequence>